<accession>Q93VH9</accession>
<accession>Q7XJS7</accession>
<proteinExistence type="evidence at transcript level"/>
<name>RS41_ARATH</name>
<feature type="chain" id="PRO_0000250181" description="Small ribosomal subunit protein eS4z">
    <location>
        <begin position="1"/>
        <end position="261"/>
    </location>
</feature>
<feature type="domain" description="S4 RNA-binding">
    <location>
        <begin position="42"/>
        <end position="104"/>
    </location>
</feature>
<sequence length="261" mass="29803">MARGLKKHLKRLNAPKHWMLDKLGGAFAPKPSSGPHKSRECLPLVLIIRNRLKYALTYREVISILMQRHIQVDGKVRTDKTYPAGFMDVVSIPKTNENFRLLYDTKGRFRLHSIKDEEAKFKLCKVRSIQFGQKGIPYLNTYDGRTIRYPDPLIKPNDTIKLDLEENKIVEFIKFDVGNVVMVTGGRNRGRVGVIKNREKHKGSFETIHIQDSTGHEFATRLGNVYTIGKGTKPWVSLPKGKGIKLTIIEEARKRLSAQQA</sequence>
<dbReference type="EMBL" id="CP002685">
    <property type="protein sequence ID" value="AEC06616.1"/>
    <property type="molecule type" value="Genomic_DNA"/>
</dbReference>
<dbReference type="EMBL" id="AF370469">
    <property type="protein sequence ID" value="AAK43846.1"/>
    <property type="molecule type" value="mRNA"/>
</dbReference>
<dbReference type="EMBL" id="AY035131">
    <property type="protein sequence ID" value="AAK59636.1"/>
    <property type="molecule type" value="mRNA"/>
</dbReference>
<dbReference type="EMBL" id="AY062983">
    <property type="protein sequence ID" value="AAL34157.1"/>
    <property type="molecule type" value="mRNA"/>
</dbReference>
<dbReference type="EMBL" id="AY064625">
    <property type="protein sequence ID" value="AAL47338.1"/>
    <property type="molecule type" value="mRNA"/>
</dbReference>
<dbReference type="EMBL" id="AY084230">
    <property type="protein sequence ID" value="AAM60830.1"/>
    <property type="molecule type" value="mRNA"/>
</dbReference>
<dbReference type="PIR" id="C84551">
    <property type="entry name" value="C84551"/>
</dbReference>
<dbReference type="RefSeq" id="NP_565414.1">
    <molecule id="Q93VH9-1"/>
    <property type="nucleotide sequence ID" value="NM_127291.4"/>
</dbReference>
<dbReference type="SMR" id="Q93VH9"/>
<dbReference type="BioGRID" id="1600">
    <property type="interactions" value="174"/>
</dbReference>
<dbReference type="FunCoup" id="Q93VH9">
    <property type="interactions" value="3167"/>
</dbReference>
<dbReference type="IntAct" id="Q93VH9">
    <property type="interactions" value="8"/>
</dbReference>
<dbReference type="STRING" id="3702.Q93VH9"/>
<dbReference type="iPTMnet" id="Q93VH9"/>
<dbReference type="PaxDb" id="3702-AT2G17360.1"/>
<dbReference type="EnsemblPlants" id="AT2G17360.1">
    <molecule id="Q93VH9-1"/>
    <property type="protein sequence ID" value="AT2G17360.1"/>
    <property type="gene ID" value="AT2G17360"/>
</dbReference>
<dbReference type="GeneID" id="816243"/>
<dbReference type="Gramene" id="AT2G17360.1">
    <molecule id="Q93VH9-1"/>
    <property type="protein sequence ID" value="AT2G17360.1"/>
    <property type="gene ID" value="AT2G17360"/>
</dbReference>
<dbReference type="KEGG" id="ath:AT2G17360"/>
<dbReference type="Araport" id="AT2G17360"/>
<dbReference type="TAIR" id="AT2G17360"/>
<dbReference type="eggNOG" id="KOG0378">
    <property type="taxonomic scope" value="Eukaryota"/>
</dbReference>
<dbReference type="HOGENOM" id="CLU_060400_1_0_1"/>
<dbReference type="InParanoid" id="Q93VH9"/>
<dbReference type="OMA" id="AGFIMDI"/>
<dbReference type="OrthoDB" id="671439at2759"/>
<dbReference type="PhylomeDB" id="Q93VH9"/>
<dbReference type="CD-CODE" id="4299E36E">
    <property type="entry name" value="Nucleolus"/>
</dbReference>
<dbReference type="PRO" id="PR:Q93VH9"/>
<dbReference type="Proteomes" id="UP000006548">
    <property type="component" value="Chromosome 2"/>
</dbReference>
<dbReference type="ExpressionAtlas" id="Q93VH9">
    <property type="expression patterns" value="baseline and differential"/>
</dbReference>
<dbReference type="GO" id="GO:0022627">
    <property type="term" value="C:cytosolic small ribosomal subunit"/>
    <property type="evidence" value="ECO:0007005"/>
    <property type="project" value="TAIR"/>
</dbReference>
<dbReference type="GO" id="GO:0005739">
    <property type="term" value="C:mitochondrion"/>
    <property type="evidence" value="ECO:0007005"/>
    <property type="project" value="TAIR"/>
</dbReference>
<dbReference type="GO" id="GO:0000325">
    <property type="term" value="C:plant-type vacuole"/>
    <property type="evidence" value="ECO:0007005"/>
    <property type="project" value="TAIR"/>
</dbReference>
<dbReference type="GO" id="GO:0003729">
    <property type="term" value="F:mRNA binding"/>
    <property type="evidence" value="ECO:0000314"/>
    <property type="project" value="TAIR"/>
</dbReference>
<dbReference type="GO" id="GO:0019843">
    <property type="term" value="F:rRNA binding"/>
    <property type="evidence" value="ECO:0007669"/>
    <property type="project" value="UniProtKB-KW"/>
</dbReference>
<dbReference type="GO" id="GO:0003735">
    <property type="term" value="F:structural constituent of ribosome"/>
    <property type="evidence" value="ECO:0000314"/>
    <property type="project" value="CAFA"/>
</dbReference>
<dbReference type="GO" id="GO:0006412">
    <property type="term" value="P:translation"/>
    <property type="evidence" value="ECO:0007669"/>
    <property type="project" value="InterPro"/>
</dbReference>
<dbReference type="CDD" id="cd06087">
    <property type="entry name" value="KOW_RPS4"/>
    <property type="match status" value="1"/>
</dbReference>
<dbReference type="CDD" id="cd00165">
    <property type="entry name" value="S4"/>
    <property type="match status" value="1"/>
</dbReference>
<dbReference type="FunFam" id="2.30.30.30:FF:000005">
    <property type="entry name" value="40S ribosomal protein S4"/>
    <property type="match status" value="1"/>
</dbReference>
<dbReference type="FunFam" id="2.40.50.740:FF:000001">
    <property type="entry name" value="40S ribosomal protein S4"/>
    <property type="match status" value="1"/>
</dbReference>
<dbReference type="FunFam" id="3.10.290.10:FF:000002">
    <property type="entry name" value="40S ribosomal protein S4"/>
    <property type="match status" value="1"/>
</dbReference>
<dbReference type="Gene3D" id="2.30.30.30">
    <property type="match status" value="1"/>
</dbReference>
<dbReference type="Gene3D" id="2.40.50.740">
    <property type="match status" value="1"/>
</dbReference>
<dbReference type="Gene3D" id="3.10.290.10">
    <property type="entry name" value="RNA-binding S4 domain"/>
    <property type="match status" value="1"/>
</dbReference>
<dbReference type="HAMAP" id="MF_00485">
    <property type="entry name" value="Ribosomal_eS4"/>
    <property type="match status" value="1"/>
</dbReference>
<dbReference type="InterPro" id="IPR005824">
    <property type="entry name" value="KOW"/>
</dbReference>
<dbReference type="InterPro" id="IPR014722">
    <property type="entry name" value="Rib_uL2_dom2"/>
</dbReference>
<dbReference type="InterPro" id="IPR000876">
    <property type="entry name" value="Ribosomal_eS4"/>
</dbReference>
<dbReference type="InterPro" id="IPR032277">
    <property type="entry name" value="Ribosomal_eS4_C"/>
</dbReference>
<dbReference type="InterPro" id="IPR013845">
    <property type="entry name" value="Ribosomal_eS4_central_region"/>
</dbReference>
<dbReference type="InterPro" id="IPR038237">
    <property type="entry name" value="Ribosomal_eS4_central_sf"/>
</dbReference>
<dbReference type="InterPro" id="IPR041982">
    <property type="entry name" value="Ribosomal_eS4_KOW"/>
</dbReference>
<dbReference type="InterPro" id="IPR013843">
    <property type="entry name" value="Ribosomal_eS4_N"/>
</dbReference>
<dbReference type="InterPro" id="IPR018199">
    <property type="entry name" value="Ribosomal_eS4_N_CS"/>
</dbReference>
<dbReference type="InterPro" id="IPR036986">
    <property type="entry name" value="S4_RNA-bd_sf"/>
</dbReference>
<dbReference type="NCBIfam" id="NF003312">
    <property type="entry name" value="PRK04313.1"/>
    <property type="match status" value="1"/>
</dbReference>
<dbReference type="PANTHER" id="PTHR11581">
    <property type="entry name" value="30S/40S RIBOSOMAL PROTEIN S4"/>
    <property type="match status" value="1"/>
</dbReference>
<dbReference type="PANTHER" id="PTHR11581:SF0">
    <property type="entry name" value="SMALL RIBOSOMAL SUBUNIT PROTEIN ES4"/>
    <property type="match status" value="1"/>
</dbReference>
<dbReference type="Pfam" id="PF16121">
    <property type="entry name" value="40S_S4_C"/>
    <property type="match status" value="1"/>
</dbReference>
<dbReference type="Pfam" id="PF00467">
    <property type="entry name" value="KOW"/>
    <property type="match status" value="1"/>
</dbReference>
<dbReference type="Pfam" id="PF00900">
    <property type="entry name" value="Ribosomal_S4e"/>
    <property type="match status" value="1"/>
</dbReference>
<dbReference type="Pfam" id="PF08071">
    <property type="entry name" value="RS4NT"/>
    <property type="match status" value="1"/>
</dbReference>
<dbReference type="PIRSF" id="PIRSF002116">
    <property type="entry name" value="Ribosomal_S4"/>
    <property type="match status" value="1"/>
</dbReference>
<dbReference type="SMART" id="SM00739">
    <property type="entry name" value="KOW"/>
    <property type="match status" value="1"/>
</dbReference>
<dbReference type="PROSITE" id="PS00528">
    <property type="entry name" value="RIBOSOMAL_S4E"/>
    <property type="match status" value="1"/>
</dbReference>
<dbReference type="PROSITE" id="PS50889">
    <property type="entry name" value="S4"/>
    <property type="match status" value="1"/>
</dbReference>
<evidence type="ECO:0000250" key="1"/>
<evidence type="ECO:0000303" key="2">
    <source>
    </source>
</evidence>
<evidence type="ECO:0000305" key="3"/>
<protein>
    <recommendedName>
        <fullName evidence="2">Small ribosomal subunit protein eS4z</fullName>
    </recommendedName>
    <alternativeName>
        <fullName>40S ribosomal protein S4-1</fullName>
    </alternativeName>
</protein>
<reference key="1">
    <citation type="journal article" date="1999" name="Nature">
        <title>Sequence and analysis of chromosome 2 of the plant Arabidopsis thaliana.</title>
        <authorList>
            <person name="Lin X."/>
            <person name="Kaul S."/>
            <person name="Rounsley S.D."/>
            <person name="Shea T.P."/>
            <person name="Benito M.-I."/>
            <person name="Town C.D."/>
            <person name="Fujii C.Y."/>
            <person name="Mason T.M."/>
            <person name="Bowman C.L."/>
            <person name="Barnstead M.E."/>
            <person name="Feldblyum T.V."/>
            <person name="Buell C.R."/>
            <person name="Ketchum K.A."/>
            <person name="Lee J.J."/>
            <person name="Ronning C.M."/>
            <person name="Koo H.L."/>
            <person name="Moffat K.S."/>
            <person name="Cronin L.A."/>
            <person name="Shen M."/>
            <person name="Pai G."/>
            <person name="Van Aken S."/>
            <person name="Umayam L."/>
            <person name="Tallon L.J."/>
            <person name="Gill J.E."/>
            <person name="Adams M.D."/>
            <person name="Carrera A.J."/>
            <person name="Creasy T.H."/>
            <person name="Goodman H.M."/>
            <person name="Somerville C.R."/>
            <person name="Copenhaver G.P."/>
            <person name="Preuss D."/>
            <person name="Nierman W.C."/>
            <person name="White O."/>
            <person name="Eisen J.A."/>
            <person name="Salzberg S.L."/>
            <person name="Fraser C.M."/>
            <person name="Venter J.C."/>
        </authorList>
    </citation>
    <scope>NUCLEOTIDE SEQUENCE [LARGE SCALE GENOMIC DNA]</scope>
    <source>
        <strain>cv. Columbia</strain>
    </source>
</reference>
<reference key="2">
    <citation type="journal article" date="2017" name="Plant J.">
        <title>Araport11: a complete reannotation of the Arabidopsis thaliana reference genome.</title>
        <authorList>
            <person name="Cheng C.Y."/>
            <person name="Krishnakumar V."/>
            <person name="Chan A.P."/>
            <person name="Thibaud-Nissen F."/>
            <person name="Schobel S."/>
            <person name="Town C.D."/>
        </authorList>
    </citation>
    <scope>GENOME REANNOTATION</scope>
    <source>
        <strain>cv. Columbia</strain>
    </source>
</reference>
<reference key="3">
    <citation type="journal article" date="2003" name="Science">
        <title>Empirical analysis of transcriptional activity in the Arabidopsis genome.</title>
        <authorList>
            <person name="Yamada K."/>
            <person name="Lim J."/>
            <person name="Dale J.M."/>
            <person name="Chen H."/>
            <person name="Shinn P."/>
            <person name="Palm C.J."/>
            <person name="Southwick A.M."/>
            <person name="Wu H.C."/>
            <person name="Kim C.J."/>
            <person name="Nguyen M."/>
            <person name="Pham P.K."/>
            <person name="Cheuk R.F."/>
            <person name="Karlin-Newmann G."/>
            <person name="Liu S.X."/>
            <person name="Lam B."/>
            <person name="Sakano H."/>
            <person name="Wu T."/>
            <person name="Yu G."/>
            <person name="Miranda M."/>
            <person name="Quach H.L."/>
            <person name="Tripp M."/>
            <person name="Chang C.H."/>
            <person name="Lee J.M."/>
            <person name="Toriumi M.J."/>
            <person name="Chan M.M."/>
            <person name="Tang C.C."/>
            <person name="Onodera C.S."/>
            <person name="Deng J.M."/>
            <person name="Akiyama K."/>
            <person name="Ansari Y."/>
            <person name="Arakawa T."/>
            <person name="Banh J."/>
            <person name="Banno F."/>
            <person name="Bowser L."/>
            <person name="Brooks S.Y."/>
            <person name="Carninci P."/>
            <person name="Chao Q."/>
            <person name="Choy N."/>
            <person name="Enju A."/>
            <person name="Goldsmith A.D."/>
            <person name="Gurjal M."/>
            <person name="Hansen N.F."/>
            <person name="Hayashizaki Y."/>
            <person name="Johnson-Hopson C."/>
            <person name="Hsuan V.W."/>
            <person name="Iida K."/>
            <person name="Karnes M."/>
            <person name="Khan S."/>
            <person name="Koesema E."/>
            <person name="Ishida J."/>
            <person name="Jiang P.X."/>
            <person name="Jones T."/>
            <person name="Kawai J."/>
            <person name="Kamiya A."/>
            <person name="Meyers C."/>
            <person name="Nakajima M."/>
            <person name="Narusaka M."/>
            <person name="Seki M."/>
            <person name="Sakurai T."/>
            <person name="Satou M."/>
            <person name="Tamse R."/>
            <person name="Vaysberg M."/>
            <person name="Wallender E.K."/>
            <person name="Wong C."/>
            <person name="Yamamura Y."/>
            <person name="Yuan S."/>
            <person name="Shinozaki K."/>
            <person name="Davis R.W."/>
            <person name="Theologis A."/>
            <person name="Ecker J.R."/>
        </authorList>
    </citation>
    <scope>NUCLEOTIDE SEQUENCE [LARGE SCALE MRNA]</scope>
    <source>
        <strain>cv. Columbia</strain>
    </source>
</reference>
<reference key="4">
    <citation type="submission" date="2002-03" db="EMBL/GenBank/DDBJ databases">
        <title>Full-length cDNA from Arabidopsis thaliana.</title>
        <authorList>
            <person name="Brover V.V."/>
            <person name="Troukhan M.E."/>
            <person name="Alexandrov N.A."/>
            <person name="Lu Y.-P."/>
            <person name="Flavell R.B."/>
            <person name="Feldmann K.A."/>
        </authorList>
    </citation>
    <scope>NUCLEOTIDE SEQUENCE [LARGE SCALE MRNA]</scope>
</reference>
<reference key="5">
    <citation type="journal article" date="2001" name="Plant Physiol.">
        <title>The organization of cytoplasmic ribosomal protein genes in the Arabidopsis genome.</title>
        <authorList>
            <person name="Barakat A."/>
            <person name="Szick-Miranda K."/>
            <person name="Chang I.-F."/>
            <person name="Guyot R."/>
            <person name="Blanc G."/>
            <person name="Cooke R."/>
            <person name="Delseny M."/>
            <person name="Bailey-Serres J."/>
        </authorList>
    </citation>
    <scope>GENE FAMILY ORGANIZATION</scope>
    <scope>NOMENCLATURE</scope>
</reference>
<reference key="6">
    <citation type="journal article" date="2023" name="Plant Cell">
        <title>An updated nomenclature for plant ribosomal protein genes.</title>
        <authorList>
            <person name="Scarpin M.R."/>
            <person name="Busche M."/>
            <person name="Martinez R.E."/>
            <person name="Harper L.C."/>
            <person name="Reiser L."/>
            <person name="Szakonyi D."/>
            <person name="Merchante C."/>
            <person name="Lan T."/>
            <person name="Xiong W."/>
            <person name="Mo B."/>
            <person name="Tang G."/>
            <person name="Chen X."/>
            <person name="Bailey-Serres J."/>
            <person name="Browning K.S."/>
            <person name="Brunkard J.O."/>
        </authorList>
    </citation>
    <scope>NOMENCLATURE</scope>
</reference>
<organism>
    <name type="scientific">Arabidopsis thaliana</name>
    <name type="common">Mouse-ear cress</name>
    <dbReference type="NCBI Taxonomy" id="3702"/>
    <lineage>
        <taxon>Eukaryota</taxon>
        <taxon>Viridiplantae</taxon>
        <taxon>Streptophyta</taxon>
        <taxon>Embryophyta</taxon>
        <taxon>Tracheophyta</taxon>
        <taxon>Spermatophyta</taxon>
        <taxon>Magnoliopsida</taxon>
        <taxon>eudicotyledons</taxon>
        <taxon>Gunneridae</taxon>
        <taxon>Pentapetalae</taxon>
        <taxon>rosids</taxon>
        <taxon>malvids</taxon>
        <taxon>Brassicales</taxon>
        <taxon>Brassicaceae</taxon>
        <taxon>Camelineae</taxon>
        <taxon>Arabidopsis</taxon>
    </lineage>
</organism>
<keyword id="KW-0025">Alternative splicing</keyword>
<keyword id="KW-0963">Cytoplasm</keyword>
<keyword id="KW-1185">Reference proteome</keyword>
<keyword id="KW-0687">Ribonucleoprotein</keyword>
<keyword id="KW-0689">Ribosomal protein</keyword>
<keyword id="KW-0694">RNA-binding</keyword>
<keyword id="KW-0699">rRNA-binding</keyword>
<gene>
    <name type="primary">RPS4A</name>
    <name type="ordered locus">At2g17360</name>
    <name type="ORF">F5J6.12</name>
</gene>
<comment type="subcellular location">
    <subcellularLocation>
        <location evidence="1">Cytoplasm</location>
    </subcellularLocation>
</comment>
<comment type="alternative products">
    <event type="alternative splicing"/>
    <isoform>
        <id>Q93VH9-1</id>
        <name>1</name>
        <sequence type="displayed"/>
    </isoform>
    <text>A number of isoforms are produced. According to EST sequences.</text>
</comment>
<comment type="similarity">
    <text evidence="3">Belongs to the eukaryotic ribosomal protein eS4 family.</text>
</comment>